<reference key="1">
    <citation type="journal article" date="2002" name="Lancet">
        <title>Genome and virulence determinants of high virulence community-acquired MRSA.</title>
        <authorList>
            <person name="Baba T."/>
            <person name="Takeuchi F."/>
            <person name="Kuroda M."/>
            <person name="Yuzawa H."/>
            <person name="Aoki K."/>
            <person name="Oguchi A."/>
            <person name="Nagai Y."/>
            <person name="Iwama N."/>
            <person name="Asano K."/>
            <person name="Naimi T."/>
            <person name="Kuroda H."/>
            <person name="Cui L."/>
            <person name="Yamamoto K."/>
            <person name="Hiramatsu K."/>
        </authorList>
    </citation>
    <scope>NUCLEOTIDE SEQUENCE [LARGE SCALE GENOMIC DNA]</scope>
    <source>
        <strain>MW2</strain>
    </source>
</reference>
<evidence type="ECO:0000255" key="1">
    <source>
        <dbReference type="HAMAP-Rule" id="MF_00164"/>
    </source>
</evidence>
<accession>Q8NVE6</accession>
<name>GLMS_STAAW</name>
<comment type="function">
    <text evidence="1">Catalyzes the first step in hexosamine metabolism, converting fructose-6P into glucosamine-6P using glutamine as a nitrogen source.</text>
</comment>
<comment type="catalytic activity">
    <reaction evidence="1">
        <text>D-fructose 6-phosphate + L-glutamine = D-glucosamine 6-phosphate + L-glutamate</text>
        <dbReference type="Rhea" id="RHEA:13237"/>
        <dbReference type="ChEBI" id="CHEBI:29985"/>
        <dbReference type="ChEBI" id="CHEBI:58359"/>
        <dbReference type="ChEBI" id="CHEBI:58725"/>
        <dbReference type="ChEBI" id="CHEBI:61527"/>
        <dbReference type="EC" id="2.6.1.16"/>
    </reaction>
</comment>
<comment type="subunit">
    <text evidence="1">Homodimer.</text>
</comment>
<comment type="subcellular location">
    <subcellularLocation>
        <location evidence="1">Cytoplasm</location>
    </subcellularLocation>
</comment>
<proteinExistence type="inferred from homology"/>
<dbReference type="EC" id="2.6.1.16" evidence="1"/>
<dbReference type="EMBL" id="BA000033">
    <property type="protein sequence ID" value="BAB95945.1"/>
    <property type="molecule type" value="Genomic_DNA"/>
</dbReference>
<dbReference type="RefSeq" id="WP_000334465.1">
    <property type="nucleotide sequence ID" value="NC_003923.1"/>
</dbReference>
<dbReference type="SMR" id="Q8NVE6"/>
<dbReference type="KEGG" id="sam:MW2080"/>
<dbReference type="HOGENOM" id="CLU_012520_7_1_9"/>
<dbReference type="GO" id="GO:0005829">
    <property type="term" value="C:cytosol"/>
    <property type="evidence" value="ECO:0007669"/>
    <property type="project" value="TreeGrafter"/>
</dbReference>
<dbReference type="GO" id="GO:0097367">
    <property type="term" value="F:carbohydrate derivative binding"/>
    <property type="evidence" value="ECO:0007669"/>
    <property type="project" value="InterPro"/>
</dbReference>
<dbReference type="GO" id="GO:0004360">
    <property type="term" value="F:glutamine-fructose-6-phosphate transaminase (isomerizing) activity"/>
    <property type="evidence" value="ECO:0007669"/>
    <property type="project" value="UniProtKB-UniRule"/>
</dbReference>
<dbReference type="GO" id="GO:0005975">
    <property type="term" value="P:carbohydrate metabolic process"/>
    <property type="evidence" value="ECO:0007669"/>
    <property type="project" value="UniProtKB-UniRule"/>
</dbReference>
<dbReference type="GO" id="GO:0006002">
    <property type="term" value="P:fructose 6-phosphate metabolic process"/>
    <property type="evidence" value="ECO:0007669"/>
    <property type="project" value="TreeGrafter"/>
</dbReference>
<dbReference type="GO" id="GO:0006487">
    <property type="term" value="P:protein N-linked glycosylation"/>
    <property type="evidence" value="ECO:0007669"/>
    <property type="project" value="TreeGrafter"/>
</dbReference>
<dbReference type="GO" id="GO:0006047">
    <property type="term" value="P:UDP-N-acetylglucosamine metabolic process"/>
    <property type="evidence" value="ECO:0007669"/>
    <property type="project" value="TreeGrafter"/>
</dbReference>
<dbReference type="CDD" id="cd00714">
    <property type="entry name" value="GFAT"/>
    <property type="match status" value="1"/>
</dbReference>
<dbReference type="CDD" id="cd05008">
    <property type="entry name" value="SIS_GlmS_GlmD_1"/>
    <property type="match status" value="1"/>
</dbReference>
<dbReference type="CDD" id="cd05009">
    <property type="entry name" value="SIS_GlmS_GlmD_2"/>
    <property type="match status" value="1"/>
</dbReference>
<dbReference type="FunFam" id="3.40.50.10490:FF:000001">
    <property type="entry name" value="Glutamine--fructose-6-phosphate aminotransferase [isomerizing]"/>
    <property type="match status" value="1"/>
</dbReference>
<dbReference type="FunFam" id="3.40.50.10490:FF:000022">
    <property type="entry name" value="Glutamine--fructose-6-phosphate aminotransferase [isomerizing]"/>
    <property type="match status" value="1"/>
</dbReference>
<dbReference type="FunFam" id="3.60.20.10:FF:000006">
    <property type="entry name" value="Glutamine--fructose-6-phosphate aminotransferase [isomerizing]"/>
    <property type="match status" value="1"/>
</dbReference>
<dbReference type="Gene3D" id="3.40.50.10490">
    <property type="entry name" value="Glucose-6-phosphate isomerase like protein, domain 1"/>
    <property type="match status" value="2"/>
</dbReference>
<dbReference type="Gene3D" id="3.60.20.10">
    <property type="entry name" value="Glutamine Phosphoribosylpyrophosphate, subunit 1, domain 1"/>
    <property type="match status" value="1"/>
</dbReference>
<dbReference type="HAMAP" id="MF_00164">
    <property type="entry name" value="GlmS"/>
    <property type="match status" value="1"/>
</dbReference>
<dbReference type="InterPro" id="IPR017932">
    <property type="entry name" value="GATase_2_dom"/>
</dbReference>
<dbReference type="InterPro" id="IPR005855">
    <property type="entry name" value="GFAT"/>
</dbReference>
<dbReference type="InterPro" id="IPR047084">
    <property type="entry name" value="GFAT_N"/>
</dbReference>
<dbReference type="InterPro" id="IPR035466">
    <property type="entry name" value="GlmS/AgaS_SIS"/>
</dbReference>
<dbReference type="InterPro" id="IPR035490">
    <property type="entry name" value="GlmS/FrlB_SIS"/>
</dbReference>
<dbReference type="InterPro" id="IPR029055">
    <property type="entry name" value="Ntn_hydrolases_N"/>
</dbReference>
<dbReference type="InterPro" id="IPR001347">
    <property type="entry name" value="SIS_dom"/>
</dbReference>
<dbReference type="InterPro" id="IPR046348">
    <property type="entry name" value="SIS_dom_sf"/>
</dbReference>
<dbReference type="NCBIfam" id="TIGR01135">
    <property type="entry name" value="glmS"/>
    <property type="match status" value="1"/>
</dbReference>
<dbReference type="NCBIfam" id="NF001484">
    <property type="entry name" value="PRK00331.1"/>
    <property type="match status" value="1"/>
</dbReference>
<dbReference type="PANTHER" id="PTHR10937">
    <property type="entry name" value="GLUCOSAMINE--FRUCTOSE-6-PHOSPHATE AMINOTRANSFERASE, ISOMERIZING"/>
    <property type="match status" value="1"/>
</dbReference>
<dbReference type="PANTHER" id="PTHR10937:SF0">
    <property type="entry name" value="GLUTAMINE--FRUCTOSE-6-PHOSPHATE TRANSAMINASE (ISOMERIZING)"/>
    <property type="match status" value="1"/>
</dbReference>
<dbReference type="Pfam" id="PF13522">
    <property type="entry name" value="GATase_6"/>
    <property type="match status" value="1"/>
</dbReference>
<dbReference type="Pfam" id="PF01380">
    <property type="entry name" value="SIS"/>
    <property type="match status" value="2"/>
</dbReference>
<dbReference type="SUPFAM" id="SSF56235">
    <property type="entry name" value="N-terminal nucleophile aminohydrolases (Ntn hydrolases)"/>
    <property type="match status" value="1"/>
</dbReference>
<dbReference type="SUPFAM" id="SSF53697">
    <property type="entry name" value="SIS domain"/>
    <property type="match status" value="1"/>
</dbReference>
<dbReference type="PROSITE" id="PS51278">
    <property type="entry name" value="GATASE_TYPE_2"/>
    <property type="match status" value="1"/>
</dbReference>
<dbReference type="PROSITE" id="PS51464">
    <property type="entry name" value="SIS"/>
    <property type="match status" value="2"/>
</dbReference>
<sequence length="601" mass="65850">MCGIVGYIGYDNAKELLLKGLEKLEYRGYDSAGIAVVNDDNTTVFKEKGRIAELRKVADSSDFDGPVGIGHTRWATHGVPNHENSHPHQSSNGRFTLVHNGVIENYEELKGEYLQGVSFISETDTEVIVQLVEYFSNQGLSTEEAFTKVVSLLHGSYALGLLDAEDKDTIYVAKNKSPLLLGVGEGFNVIASDALAMLQVTSEYKEIHDHEIVIVKKDEVIIKDADGNVVERDSYIAEIDASDAEKGVYAHYMLKEIHEQPAVMRRIIQEYQDAEGNLKIDQDIINDVKEADRIYVIAAGTSYHAGLVGKEFLEKWAGVPTEVHVASEFVYNMPLLSEKPLFVYISQSGETADSRAVLVETNKLGHKSLTITNVAGSTLSREADHTLLLHAGPEIAVASTKAYTAQIAVLSILSQIVAKEHGREADIDLLRELAKVTTAIEAIVDDAPIMEQIATDFLETTRNAFFIGRTIDYNVSLEGALKLKEISYIQAEGFAGGELKHGTIALIEEGTPVVGLATQEKVNLSIRGNVKEVVARGAHPCIISMEGLEKEGDTYVIPHVHELLTPLVSVVALQLISYYAALHRDLDVDKPRNLAKSVTVE</sequence>
<keyword id="KW-0032">Aminotransferase</keyword>
<keyword id="KW-0963">Cytoplasm</keyword>
<keyword id="KW-0315">Glutamine amidotransferase</keyword>
<keyword id="KW-0677">Repeat</keyword>
<keyword id="KW-0808">Transferase</keyword>
<protein>
    <recommendedName>
        <fullName evidence="1">Glutamine--fructose-6-phosphate aminotransferase [isomerizing]</fullName>
        <ecNumber evidence="1">2.6.1.16</ecNumber>
    </recommendedName>
    <alternativeName>
        <fullName evidence="1">D-fructose-6-phosphate amidotransferase</fullName>
    </alternativeName>
    <alternativeName>
        <fullName evidence="1">GFAT</fullName>
    </alternativeName>
    <alternativeName>
        <fullName evidence="1">Glucosamine-6-phosphate synthase</fullName>
    </alternativeName>
    <alternativeName>
        <fullName evidence="1">Hexosephosphate aminotransferase</fullName>
    </alternativeName>
    <alternativeName>
        <fullName evidence="1">L-glutamine--D-fructose-6-phosphate amidotransferase</fullName>
    </alternativeName>
</protein>
<organism>
    <name type="scientific">Staphylococcus aureus (strain MW2)</name>
    <dbReference type="NCBI Taxonomy" id="196620"/>
    <lineage>
        <taxon>Bacteria</taxon>
        <taxon>Bacillati</taxon>
        <taxon>Bacillota</taxon>
        <taxon>Bacilli</taxon>
        <taxon>Bacillales</taxon>
        <taxon>Staphylococcaceae</taxon>
        <taxon>Staphylococcus</taxon>
    </lineage>
</organism>
<feature type="initiator methionine" description="Removed" evidence="1">
    <location>
        <position position="1"/>
    </location>
</feature>
<feature type="chain" id="PRO_0000135384" description="Glutamine--fructose-6-phosphate aminotransferase [isomerizing]">
    <location>
        <begin position="2"/>
        <end position="601"/>
    </location>
</feature>
<feature type="domain" description="Glutamine amidotransferase type-2" evidence="1">
    <location>
        <begin position="2"/>
        <end position="218"/>
    </location>
</feature>
<feature type="domain" description="SIS 1" evidence="1">
    <location>
        <begin position="284"/>
        <end position="423"/>
    </location>
</feature>
<feature type="domain" description="SIS 2" evidence="1">
    <location>
        <begin position="453"/>
        <end position="591"/>
    </location>
</feature>
<feature type="active site" description="Nucleophile; for GATase activity" evidence="1">
    <location>
        <position position="2"/>
    </location>
</feature>
<feature type="active site" description="For Fru-6P isomerization activity" evidence="1">
    <location>
        <position position="596"/>
    </location>
</feature>
<gene>
    <name evidence="1" type="primary">glmS</name>
    <name type="ordered locus">MW2080</name>
</gene>